<evidence type="ECO:0000269" key="1">
    <source ref="5"/>
</evidence>
<evidence type="ECO:0000305" key="2"/>
<evidence type="ECO:0007829" key="3">
    <source>
        <dbReference type="PDB" id="2GM3"/>
    </source>
</evidence>
<reference key="1">
    <citation type="journal article" date="2000" name="Nature">
        <title>Sequence and analysis of chromosome 3 of the plant Arabidopsis thaliana.</title>
        <authorList>
            <person name="Salanoubat M."/>
            <person name="Lemcke K."/>
            <person name="Rieger M."/>
            <person name="Ansorge W."/>
            <person name="Unseld M."/>
            <person name="Fartmann B."/>
            <person name="Valle G."/>
            <person name="Bloecker H."/>
            <person name="Perez-Alonso M."/>
            <person name="Obermaier B."/>
            <person name="Delseny M."/>
            <person name="Boutry M."/>
            <person name="Grivell L.A."/>
            <person name="Mache R."/>
            <person name="Puigdomenech P."/>
            <person name="De Simone V."/>
            <person name="Choisne N."/>
            <person name="Artiguenave F."/>
            <person name="Robert C."/>
            <person name="Brottier P."/>
            <person name="Wincker P."/>
            <person name="Cattolico L."/>
            <person name="Weissenbach J."/>
            <person name="Saurin W."/>
            <person name="Quetier F."/>
            <person name="Schaefer M."/>
            <person name="Mueller-Auer S."/>
            <person name="Gabel C."/>
            <person name="Fuchs M."/>
            <person name="Benes V."/>
            <person name="Wurmbach E."/>
            <person name="Drzonek H."/>
            <person name="Erfle H."/>
            <person name="Jordan N."/>
            <person name="Bangert S."/>
            <person name="Wiedelmann R."/>
            <person name="Kranz H."/>
            <person name="Voss H."/>
            <person name="Holland R."/>
            <person name="Brandt P."/>
            <person name="Nyakatura G."/>
            <person name="Vezzi A."/>
            <person name="D'Angelo M."/>
            <person name="Pallavicini A."/>
            <person name="Toppo S."/>
            <person name="Simionati B."/>
            <person name="Conrad A."/>
            <person name="Hornischer K."/>
            <person name="Kauer G."/>
            <person name="Loehnert T.-H."/>
            <person name="Nordsiek G."/>
            <person name="Reichelt J."/>
            <person name="Scharfe M."/>
            <person name="Schoen O."/>
            <person name="Bargues M."/>
            <person name="Terol J."/>
            <person name="Climent J."/>
            <person name="Navarro P."/>
            <person name="Collado C."/>
            <person name="Perez-Perez A."/>
            <person name="Ottenwaelder B."/>
            <person name="Duchemin D."/>
            <person name="Cooke R."/>
            <person name="Laudie M."/>
            <person name="Berger-Llauro C."/>
            <person name="Purnelle B."/>
            <person name="Masuy D."/>
            <person name="de Haan M."/>
            <person name="Maarse A.C."/>
            <person name="Alcaraz J.-P."/>
            <person name="Cottet A."/>
            <person name="Casacuberta E."/>
            <person name="Monfort A."/>
            <person name="Argiriou A."/>
            <person name="Flores M."/>
            <person name="Liguori R."/>
            <person name="Vitale D."/>
            <person name="Mannhaupt G."/>
            <person name="Haase D."/>
            <person name="Schoof H."/>
            <person name="Rudd S."/>
            <person name="Zaccaria P."/>
            <person name="Mewes H.-W."/>
            <person name="Mayer K.F.X."/>
            <person name="Kaul S."/>
            <person name="Town C.D."/>
            <person name="Koo H.L."/>
            <person name="Tallon L.J."/>
            <person name="Jenkins J."/>
            <person name="Rooney T."/>
            <person name="Rizzo M."/>
            <person name="Walts A."/>
            <person name="Utterback T."/>
            <person name="Fujii C.Y."/>
            <person name="Shea T.P."/>
            <person name="Creasy T.H."/>
            <person name="Haas B."/>
            <person name="Maiti R."/>
            <person name="Wu D."/>
            <person name="Peterson J."/>
            <person name="Van Aken S."/>
            <person name="Pai G."/>
            <person name="Militscher J."/>
            <person name="Sellers P."/>
            <person name="Gill J.E."/>
            <person name="Feldblyum T.V."/>
            <person name="Preuss D."/>
            <person name="Lin X."/>
            <person name="Nierman W.C."/>
            <person name="Salzberg S.L."/>
            <person name="White O."/>
            <person name="Venter J.C."/>
            <person name="Fraser C.M."/>
            <person name="Kaneko T."/>
            <person name="Nakamura Y."/>
            <person name="Sato S."/>
            <person name="Kato T."/>
            <person name="Asamizu E."/>
            <person name="Sasamoto S."/>
            <person name="Kimura T."/>
            <person name="Idesawa K."/>
            <person name="Kawashima K."/>
            <person name="Kishida Y."/>
            <person name="Kiyokawa C."/>
            <person name="Kohara M."/>
            <person name="Matsumoto M."/>
            <person name="Matsuno A."/>
            <person name="Muraki A."/>
            <person name="Nakayama S."/>
            <person name="Nakazaki N."/>
            <person name="Shinpo S."/>
            <person name="Takeuchi C."/>
            <person name="Wada T."/>
            <person name="Watanabe A."/>
            <person name="Yamada M."/>
            <person name="Yasuda M."/>
            <person name="Tabata S."/>
        </authorList>
    </citation>
    <scope>NUCLEOTIDE SEQUENCE [LARGE SCALE GENOMIC DNA]</scope>
    <source>
        <strain>cv. Columbia</strain>
    </source>
</reference>
<reference key="2">
    <citation type="journal article" date="2017" name="Plant J.">
        <title>Araport11: a complete reannotation of the Arabidopsis thaliana reference genome.</title>
        <authorList>
            <person name="Cheng C.Y."/>
            <person name="Krishnakumar V."/>
            <person name="Chan A.P."/>
            <person name="Thibaud-Nissen F."/>
            <person name="Schobel S."/>
            <person name="Town C.D."/>
        </authorList>
    </citation>
    <scope>GENOME REANNOTATION</scope>
    <source>
        <strain>cv. Columbia</strain>
    </source>
</reference>
<reference key="3">
    <citation type="journal article" date="2003" name="Science">
        <title>Empirical analysis of transcriptional activity in the Arabidopsis genome.</title>
        <authorList>
            <person name="Yamada K."/>
            <person name="Lim J."/>
            <person name="Dale J.M."/>
            <person name="Chen H."/>
            <person name="Shinn P."/>
            <person name="Palm C.J."/>
            <person name="Southwick A.M."/>
            <person name="Wu H.C."/>
            <person name="Kim C.J."/>
            <person name="Nguyen M."/>
            <person name="Pham P.K."/>
            <person name="Cheuk R.F."/>
            <person name="Karlin-Newmann G."/>
            <person name="Liu S.X."/>
            <person name="Lam B."/>
            <person name="Sakano H."/>
            <person name="Wu T."/>
            <person name="Yu G."/>
            <person name="Miranda M."/>
            <person name="Quach H.L."/>
            <person name="Tripp M."/>
            <person name="Chang C.H."/>
            <person name="Lee J.M."/>
            <person name="Toriumi M.J."/>
            <person name="Chan M.M."/>
            <person name="Tang C.C."/>
            <person name="Onodera C.S."/>
            <person name="Deng J.M."/>
            <person name="Akiyama K."/>
            <person name="Ansari Y."/>
            <person name="Arakawa T."/>
            <person name="Banh J."/>
            <person name="Banno F."/>
            <person name="Bowser L."/>
            <person name="Brooks S.Y."/>
            <person name="Carninci P."/>
            <person name="Chao Q."/>
            <person name="Choy N."/>
            <person name="Enju A."/>
            <person name="Goldsmith A.D."/>
            <person name="Gurjal M."/>
            <person name="Hansen N.F."/>
            <person name="Hayashizaki Y."/>
            <person name="Johnson-Hopson C."/>
            <person name="Hsuan V.W."/>
            <person name="Iida K."/>
            <person name="Karnes M."/>
            <person name="Khan S."/>
            <person name="Koesema E."/>
            <person name="Ishida J."/>
            <person name="Jiang P.X."/>
            <person name="Jones T."/>
            <person name="Kawai J."/>
            <person name="Kamiya A."/>
            <person name="Meyers C."/>
            <person name="Nakajima M."/>
            <person name="Narusaka M."/>
            <person name="Seki M."/>
            <person name="Sakurai T."/>
            <person name="Satou M."/>
            <person name="Tamse R."/>
            <person name="Vaysberg M."/>
            <person name="Wallender E.K."/>
            <person name="Wong C."/>
            <person name="Yamamura Y."/>
            <person name="Yuan S."/>
            <person name="Shinozaki K."/>
            <person name="Davis R.W."/>
            <person name="Theologis A."/>
            <person name="Ecker J.R."/>
        </authorList>
    </citation>
    <scope>NUCLEOTIDE SEQUENCE [LARGE SCALE MRNA]</scope>
    <source>
        <strain>cv. Columbia</strain>
    </source>
</reference>
<reference key="4">
    <citation type="submission" date="2002-03" db="EMBL/GenBank/DDBJ databases">
        <title>Full-length cDNA from Arabidopsis thaliana.</title>
        <authorList>
            <person name="Brover V.V."/>
            <person name="Troukhan M.E."/>
            <person name="Alexandrov N.A."/>
            <person name="Lu Y.-P."/>
            <person name="Flavell R.B."/>
            <person name="Feldmann K.A."/>
        </authorList>
    </citation>
    <scope>NUCLEOTIDE SEQUENCE [LARGE SCALE MRNA]</scope>
</reference>
<reference key="5">
    <citation type="submission" date="2005-06" db="PDB data bank">
        <title>Crystal structure of an universal stress protein family protein from Arabidopsis thaliana At3g01520 with AMP bound.</title>
        <authorList>
            <consortium name="Center for eukaryotic structural genomics (CESG)"/>
        </authorList>
    </citation>
    <scope>X-RAY CRYSTALLOGRAPHY (2.46 ANGSTROMS) OF 2-175 IN COMPLEX WITH AMP</scope>
</reference>
<dbReference type="EMBL" id="AC009325">
    <property type="protein sequence ID" value="AAF01537.1"/>
    <property type="status" value="ALT_SEQ"/>
    <property type="molecule type" value="Genomic_DNA"/>
</dbReference>
<dbReference type="EMBL" id="CP002686">
    <property type="protein sequence ID" value="AEE73681.1"/>
    <property type="molecule type" value="Genomic_DNA"/>
</dbReference>
<dbReference type="EMBL" id="AY052696">
    <property type="protein sequence ID" value="AAK96600.1"/>
    <property type="molecule type" value="mRNA"/>
</dbReference>
<dbReference type="EMBL" id="AF446878">
    <property type="protein sequence ID" value="AAL38611.1"/>
    <property type="molecule type" value="mRNA"/>
</dbReference>
<dbReference type="EMBL" id="AY084275">
    <property type="protein sequence ID" value="AAM60866.1"/>
    <property type="status" value="ALT_INIT"/>
    <property type="molecule type" value="mRNA"/>
</dbReference>
<dbReference type="RefSeq" id="NP_566140.1">
    <property type="nucleotide sequence ID" value="NM_111018.3"/>
</dbReference>
<dbReference type="PDB" id="2GM3">
    <property type="method" value="X-ray"/>
    <property type="resolution" value="2.46 A"/>
    <property type="chains" value="A/B/C/D/E/F=2-175"/>
</dbReference>
<dbReference type="PDBsum" id="2GM3"/>
<dbReference type="SMR" id="Q8LGG8"/>
<dbReference type="FunCoup" id="Q8LGG8">
    <property type="interactions" value="74"/>
</dbReference>
<dbReference type="STRING" id="3702.Q8LGG8"/>
<dbReference type="PaxDb" id="3702-AT3G01520.1"/>
<dbReference type="ProteomicsDB" id="228604"/>
<dbReference type="DNASU" id="821122"/>
<dbReference type="EnsemblPlants" id="AT3G01520.1">
    <property type="protein sequence ID" value="AT3G01520.1"/>
    <property type="gene ID" value="AT3G01520"/>
</dbReference>
<dbReference type="GeneID" id="821122"/>
<dbReference type="Gramene" id="AT3G01520.1">
    <property type="protein sequence ID" value="AT3G01520.1"/>
    <property type="gene ID" value="AT3G01520"/>
</dbReference>
<dbReference type="KEGG" id="ath:AT3G01520"/>
<dbReference type="Araport" id="AT3G01520"/>
<dbReference type="TAIR" id="AT3G01520"/>
<dbReference type="eggNOG" id="ENOG502QUI8">
    <property type="taxonomic scope" value="Eukaryota"/>
</dbReference>
<dbReference type="HOGENOM" id="CLU_049301_9_3_1"/>
<dbReference type="InParanoid" id="Q8LGG8"/>
<dbReference type="OMA" id="HPSISCK"/>
<dbReference type="OrthoDB" id="843225at2759"/>
<dbReference type="PhylomeDB" id="Q8LGG8"/>
<dbReference type="CD-CODE" id="4299E36E">
    <property type="entry name" value="Nucleolus"/>
</dbReference>
<dbReference type="EvolutionaryTrace" id="Q8LGG8"/>
<dbReference type="PRO" id="PR:Q8LGG8"/>
<dbReference type="Proteomes" id="UP000006548">
    <property type="component" value="Chromosome 3"/>
</dbReference>
<dbReference type="ExpressionAtlas" id="Q8LGG8">
    <property type="expression patterns" value="baseline and differential"/>
</dbReference>
<dbReference type="GO" id="GO:0005829">
    <property type="term" value="C:cytosol"/>
    <property type="evidence" value="ECO:0007005"/>
    <property type="project" value="TAIR"/>
</dbReference>
<dbReference type="GO" id="GO:0005886">
    <property type="term" value="C:plasma membrane"/>
    <property type="evidence" value="ECO:0007005"/>
    <property type="project" value="TAIR"/>
</dbReference>
<dbReference type="GO" id="GO:0016208">
    <property type="term" value="F:AMP binding"/>
    <property type="evidence" value="ECO:0000353"/>
    <property type="project" value="TAIR"/>
</dbReference>
<dbReference type="CDD" id="cd23659">
    <property type="entry name" value="USP_At3g01520-like"/>
    <property type="match status" value="1"/>
</dbReference>
<dbReference type="FunFam" id="3.40.50.620:FF:000142">
    <property type="entry name" value="Universal stress protein A-like protein"/>
    <property type="match status" value="1"/>
</dbReference>
<dbReference type="Gene3D" id="3.40.50.620">
    <property type="entry name" value="HUPs"/>
    <property type="match status" value="1"/>
</dbReference>
<dbReference type="InterPro" id="IPR044187">
    <property type="entry name" value="At3g01520-like_plant"/>
</dbReference>
<dbReference type="InterPro" id="IPR014729">
    <property type="entry name" value="Rossmann-like_a/b/a_fold"/>
</dbReference>
<dbReference type="InterPro" id="IPR006015">
    <property type="entry name" value="Universal_stress_UspA"/>
</dbReference>
<dbReference type="InterPro" id="IPR006016">
    <property type="entry name" value="UspA"/>
</dbReference>
<dbReference type="PANTHER" id="PTHR47710">
    <property type="entry name" value="ADENINE NUCLEOTIDE ALPHA HYDROLASES-LIKE SUPERFAMILY PROTEIN"/>
    <property type="match status" value="1"/>
</dbReference>
<dbReference type="PANTHER" id="PTHR47710:SF2">
    <property type="entry name" value="UNIVERSAL STRESS PROTEIN A-LIKE PROTEIN"/>
    <property type="match status" value="1"/>
</dbReference>
<dbReference type="Pfam" id="PF00582">
    <property type="entry name" value="Usp"/>
    <property type="match status" value="1"/>
</dbReference>
<dbReference type="PRINTS" id="PR01438">
    <property type="entry name" value="UNVRSLSTRESS"/>
</dbReference>
<dbReference type="SUPFAM" id="SSF52402">
    <property type="entry name" value="Adenine nucleotide alpha hydrolases-like"/>
    <property type="match status" value="1"/>
</dbReference>
<comment type="subunit">
    <text evidence="1">Homohexamer.</text>
</comment>
<comment type="similarity">
    <text evidence="2">Belongs to the universal stress protein A family.</text>
</comment>
<comment type="sequence caution" evidence="2">
    <conflict type="erroneous gene model prediction">
        <sequence resource="EMBL-CDS" id="AAF01537"/>
    </conflict>
</comment>
<comment type="sequence caution" evidence="2">
    <conflict type="erroneous initiation">
        <sequence resource="EMBL-CDS" id="AAM60866"/>
    </conflict>
</comment>
<feature type="chain" id="PRO_0000250644" description="Universal stress protein A-like protein">
    <location>
        <begin position="1"/>
        <end position="175"/>
    </location>
</feature>
<feature type="binding site" evidence="1">
    <location>
        <position position="11"/>
    </location>
    <ligand>
        <name>AMP</name>
        <dbReference type="ChEBI" id="CHEBI:456215"/>
    </ligand>
</feature>
<feature type="binding site" evidence="1">
    <location>
        <position position="12"/>
    </location>
    <ligand>
        <name>AMP</name>
        <dbReference type="ChEBI" id="CHEBI:456215"/>
    </ligand>
</feature>
<feature type="binding site" evidence="1">
    <location>
        <position position="13"/>
    </location>
    <ligand>
        <name>AMP</name>
        <dbReference type="ChEBI" id="CHEBI:456215"/>
    </ligand>
</feature>
<feature type="binding site" evidence="1">
    <location>
        <position position="26"/>
    </location>
    <ligand>
        <name>AMP</name>
        <dbReference type="ChEBI" id="CHEBI:456215"/>
    </ligand>
</feature>
<feature type="binding site" evidence="1">
    <location>
        <position position="27"/>
    </location>
    <ligand>
        <name>AMP</name>
        <dbReference type="ChEBI" id="CHEBI:456215"/>
    </ligand>
</feature>
<feature type="binding site" evidence="1">
    <location>
        <position position="53"/>
    </location>
    <ligand>
        <name>AMP</name>
        <dbReference type="ChEBI" id="CHEBI:456215"/>
    </ligand>
</feature>
<feature type="binding site" evidence="1">
    <location>
        <position position="131"/>
    </location>
    <ligand>
        <name>AMP</name>
        <dbReference type="ChEBI" id="CHEBI:456215"/>
    </ligand>
</feature>
<feature type="binding site" evidence="1">
    <location>
        <position position="133"/>
    </location>
    <ligand>
        <name>AMP</name>
        <dbReference type="ChEBI" id="CHEBI:456215"/>
    </ligand>
</feature>
<feature type="binding site" evidence="1">
    <location>
        <position position="145"/>
    </location>
    <ligand>
        <name>AMP</name>
        <dbReference type="ChEBI" id="CHEBI:456215"/>
    </ligand>
</feature>
<feature type="binding site" evidence="1">
    <location>
        <position position="146"/>
    </location>
    <ligand>
        <name>AMP</name>
        <dbReference type="ChEBI" id="CHEBI:456215"/>
    </ligand>
</feature>
<feature type="binding site" evidence="1">
    <location>
        <position position="147"/>
    </location>
    <ligand>
        <name>AMP</name>
        <dbReference type="ChEBI" id="CHEBI:456215"/>
    </ligand>
</feature>
<feature type="strand" evidence="3">
    <location>
        <begin position="6"/>
        <end position="11"/>
    </location>
</feature>
<feature type="strand" evidence="3">
    <location>
        <begin position="16"/>
        <end position="18"/>
    </location>
</feature>
<feature type="helix" evidence="3">
    <location>
        <begin position="25"/>
        <end position="37"/>
    </location>
</feature>
<feature type="turn" evidence="3">
    <location>
        <begin position="38"/>
        <end position="41"/>
    </location>
</feature>
<feature type="strand" evidence="3">
    <location>
        <begin position="45"/>
        <end position="54"/>
    </location>
</feature>
<feature type="helix" evidence="3">
    <location>
        <begin position="71"/>
        <end position="77"/>
    </location>
</feature>
<feature type="helix" evidence="3">
    <location>
        <begin position="81"/>
        <end position="99"/>
    </location>
</feature>
<feature type="strand" evidence="3">
    <location>
        <begin position="102"/>
        <end position="110"/>
    </location>
</feature>
<feature type="helix" evidence="3">
    <location>
        <begin position="112"/>
        <end position="123"/>
    </location>
</feature>
<feature type="strand" evidence="3">
    <location>
        <begin position="126"/>
        <end position="132"/>
    </location>
</feature>
<feature type="helix" evidence="3">
    <location>
        <begin position="146"/>
        <end position="153"/>
    </location>
</feature>
<feature type="strand" evidence="3">
    <location>
        <begin position="158"/>
        <end position="162"/>
    </location>
</feature>
<feature type="helix" evidence="3">
    <location>
        <begin position="165"/>
        <end position="167"/>
    </location>
</feature>
<sequence length="175" mass="19568">MGSEPTKVMVAVNASTIKDYPNPSISCKRAFEWTLEKIVRSNTSDFKILLLHVQVVDEDGFDDVDSIYASPEDFRDMRQSNKAKGLHLLEFFVNKCHEIGVGCEAWIKTGDPKDVICQEVKRVRPDFLVVGSRGLGRFQKVFVGTVSAFCVKHAECPVMTIKRNADETPSDPADD</sequence>
<gene>
    <name type="ordered locus">At3g01520</name>
    <name type="ORF">F4P13.7</name>
</gene>
<protein>
    <recommendedName>
        <fullName>Universal stress protein A-like protein</fullName>
    </recommendedName>
</protein>
<accession>Q8LGG8</accession>
<accession>Q940U0</accession>
<accession>Q9SSA2</accession>
<proteinExistence type="evidence at protein level"/>
<keyword id="KW-0002">3D-structure</keyword>
<keyword id="KW-1185">Reference proteome</keyword>
<name>USPAL_ARATH</name>
<organism>
    <name type="scientific">Arabidopsis thaliana</name>
    <name type="common">Mouse-ear cress</name>
    <dbReference type="NCBI Taxonomy" id="3702"/>
    <lineage>
        <taxon>Eukaryota</taxon>
        <taxon>Viridiplantae</taxon>
        <taxon>Streptophyta</taxon>
        <taxon>Embryophyta</taxon>
        <taxon>Tracheophyta</taxon>
        <taxon>Spermatophyta</taxon>
        <taxon>Magnoliopsida</taxon>
        <taxon>eudicotyledons</taxon>
        <taxon>Gunneridae</taxon>
        <taxon>Pentapetalae</taxon>
        <taxon>rosids</taxon>
        <taxon>malvids</taxon>
        <taxon>Brassicales</taxon>
        <taxon>Brassicaceae</taxon>
        <taxon>Camelineae</taxon>
        <taxon>Arabidopsis</taxon>
    </lineage>
</organism>